<protein>
    <recommendedName>
        <fullName evidence="3">Alpha-ionylideneethane synthase abl3</fullName>
        <ecNumber evidence="5">4.2.3.-</ecNumber>
    </recommendedName>
    <alternativeName>
        <fullName evidence="3">Abscisic acid biosynthesis cluster protein 3</fullName>
    </alternativeName>
    <alternativeName>
        <fullName evidence="4">Sesquiterpene synthase abl3</fullName>
    </alternativeName>
</protein>
<gene>
    <name evidence="3" type="primary">abl3</name>
    <name type="ORF">LEMA_P087760.1</name>
</gene>
<keyword id="KW-0456">Lyase</keyword>
<keyword id="KW-1185">Reference proteome</keyword>
<keyword id="KW-0843">Virulence</keyword>
<dbReference type="EC" id="4.2.3.-" evidence="5"/>
<dbReference type="EMBL" id="FP929136">
    <property type="protein sequence ID" value="CBX99537.1"/>
    <property type="molecule type" value="Genomic_DNA"/>
</dbReference>
<dbReference type="RefSeq" id="XP_003843016.1">
    <property type="nucleotide sequence ID" value="XM_003842968.1"/>
</dbReference>
<dbReference type="SMR" id="E5A7E2"/>
<dbReference type="STRING" id="985895.E5A7E2"/>
<dbReference type="EnsemblFungi" id="CBX99537">
    <property type="protein sequence ID" value="CBX99537"/>
    <property type="gene ID" value="LEMA_P087760.1"/>
</dbReference>
<dbReference type="GeneID" id="13289267"/>
<dbReference type="VEuPathDB" id="FungiDB:LEMA_P087760.1"/>
<dbReference type="eggNOG" id="ENOG502R6U3">
    <property type="taxonomic scope" value="Eukaryota"/>
</dbReference>
<dbReference type="HOGENOM" id="CLU_707921_0_0_1"/>
<dbReference type="InParanoid" id="E5A7E2"/>
<dbReference type="OMA" id="CVIPEYT"/>
<dbReference type="OrthoDB" id="2821964at2759"/>
<dbReference type="Proteomes" id="UP000002668">
    <property type="component" value="Genome"/>
</dbReference>
<dbReference type="GO" id="GO:0016829">
    <property type="term" value="F:lyase activity"/>
    <property type="evidence" value="ECO:0007669"/>
    <property type="project" value="UniProtKB-KW"/>
</dbReference>
<organism>
    <name type="scientific">Leptosphaeria maculans (strain JN3 / isolate v23.1.3 / race Av1-4-5-6-7-8)</name>
    <name type="common">Blackleg fungus</name>
    <name type="synonym">Phoma lingam</name>
    <dbReference type="NCBI Taxonomy" id="985895"/>
    <lineage>
        <taxon>Eukaryota</taxon>
        <taxon>Fungi</taxon>
        <taxon>Dikarya</taxon>
        <taxon>Ascomycota</taxon>
        <taxon>Pezizomycotina</taxon>
        <taxon>Dothideomycetes</taxon>
        <taxon>Pleosporomycetidae</taxon>
        <taxon>Pleosporales</taxon>
        <taxon>Pleosporineae</taxon>
        <taxon>Leptosphaeriaceae</taxon>
        <taxon>Plenodomus</taxon>
        <taxon>Plenodomus lingam/Leptosphaeria maculans species complex</taxon>
    </lineage>
</organism>
<sequence>MLLYNSFTEGLKFTKTKILLRYYASALIDVPRDDVIEDAGVSKSQAMQNIRDRWYYPPDLANDLQDLDMPKAMKQEIFACAWEYTRCVIPQYTNWPRYVAFMRIIIIGIVAEFRGNLVDVTAGDDMMGYNLSTVLDALFLGTADRENMCREYRSFLLITADKSSERRNGELFRRYVNALAHSPRQWFRMRDADALARFTIAASLACNDLDDLKFSNMEYEILTEIGDTLYDAVAFFKHRSEGETNSTFAYMPPDMRVEAFHQAREVLWAMDVALAPKTTLQGVINFVRFFGGPIHMMMRRYRFVEEHLTIGQVETEKVVDQTRKNFKLWNRLDAKDAKAGDEKRYKDIVSNNSGEVMFPGLVEFLENEDNCPDCCFRESYGAETKHQFGGVQICSACREEWGRYMKSLPDRAVKAFPELAYVLSIP</sequence>
<feature type="chain" id="PRO_0000448435" description="Alpha-ionylideneethane synthase abl3">
    <location>
        <begin position="1"/>
        <end position="426"/>
    </location>
</feature>
<accession>E5A7E2</accession>
<evidence type="ECO:0000250" key="1">
    <source>
        <dbReference type="UniProtKB" id="Q14RS2"/>
    </source>
</evidence>
<evidence type="ECO:0000269" key="2">
    <source>
    </source>
</evidence>
<evidence type="ECO:0000303" key="3">
    <source>
    </source>
</evidence>
<evidence type="ECO:0000305" key="4"/>
<evidence type="ECO:0000305" key="5">
    <source>
    </source>
</evidence>
<proteinExistence type="evidence at transcript level"/>
<reference key="1">
    <citation type="journal article" date="2011" name="Nat. Commun.">
        <title>Effector diversification within compartments of the Leptosphaeria maculans genome affected by Repeat-Induced Point mutations.</title>
        <authorList>
            <person name="Rouxel T."/>
            <person name="Grandaubert J."/>
            <person name="Hane J.K."/>
            <person name="Hoede C."/>
            <person name="van de Wouw A.P."/>
            <person name="Couloux A."/>
            <person name="Dominguez V."/>
            <person name="Anthouard V."/>
            <person name="Bally P."/>
            <person name="Bourras S."/>
            <person name="Cozijnsen A.J."/>
            <person name="Ciuffetti L.M."/>
            <person name="Degrave A."/>
            <person name="Dilmaghani A."/>
            <person name="Duret L."/>
            <person name="Fudal I."/>
            <person name="Goodwin S.B."/>
            <person name="Gout L."/>
            <person name="Glaser N."/>
            <person name="Linglin J."/>
            <person name="Kema G.H.J."/>
            <person name="Lapalu N."/>
            <person name="Lawrence C.B."/>
            <person name="May K."/>
            <person name="Meyer M."/>
            <person name="Ollivier B."/>
            <person name="Poulain J."/>
            <person name="Schoch C.L."/>
            <person name="Simon A."/>
            <person name="Spatafora J.W."/>
            <person name="Stachowiak A."/>
            <person name="Turgeon B.G."/>
            <person name="Tyler B.M."/>
            <person name="Vincent D."/>
            <person name="Weissenbach J."/>
            <person name="Amselem J."/>
            <person name="Quesneville H."/>
            <person name="Oliver R.P."/>
            <person name="Wincker P."/>
            <person name="Balesdent M.-H."/>
            <person name="Howlett B.J."/>
        </authorList>
    </citation>
    <scope>NUCLEOTIDE SEQUENCE [LARGE SCALE GENOMIC DNA]</scope>
    <source>
        <strain>JN3 / isolate v23.1.3 / race Av1-4-5-6-7-8</strain>
    </source>
</reference>
<reference key="2">
    <citation type="journal article" date="2019" name="Fungal Genet. Biol.">
        <title>Identification of a gene cluster for the synthesis of the plant hormone abscisic acid in the plant pathogen Leptosphaeria maculans.</title>
        <authorList>
            <person name="Darma R."/>
            <person name="Lutz A."/>
            <person name="Elliott C.E."/>
            <person name="Idnurm A."/>
        </authorList>
    </citation>
    <scope>IDENTIFICATION</scope>
    <scope>INDUCTION</scope>
    <scope>FUNCTION</scope>
    <scope>PATHWAY</scope>
</reference>
<name>ABL3_LEPMJ</name>
<comment type="function">
    <text evidence="1 2">Alpha-ionylideneethane synthase; part of the gene cluster that mediates the biosynthesis of abscisic acid (ABA), a phytohormone that acts antagonistically toward salicylic acid (SA), jasmonic acid (JA) and ethylene (ETH) signaling, to impede plant defense responses (PubMed:31034868). The first step of the pathway catalyzes the reaction from farnesyl diphosphate to alpha-ionylideneethane performed by the alpha-ionylideneethane synthase abl3 via a three-step reaction mechanism involving 2 neutral intermediates, beta-farnesene and allofarnesene (By similarity). The cytochrome P450 monooxygenase abl1 might then be involved in the conversion of alpha-ionylideneethane to alpha-ionylideneacetic acid (By similarity). Alpha-ionylideneacetic acid is further converted to abscisic acid in 2 steps involving the cytochrome P450 monooxygenase abl2 and the short-chain dehydrogenase/reductase abl4, via the intermediates 1'-deoxy-ABA or 1',4'-trans-diol-ABA, depending on the order of action of these 2 enzymes (By similarity). Abl2 is responsible for the hydroxylation of carbon atom C-1' and abl4 might be involved in the oxidation of the C-4' carbon atom (By similarity).</text>
</comment>
<comment type="pathway">
    <text evidence="2">Hormone biosynthesis.</text>
</comment>
<comment type="induction">
    <text evidence="2">Expression is induced during the early biotrophic stage of development (PubMed:31034868). Expression is positively regulated by the ABA cluster-specific transcription regulator abl7 (PubMed:31034868).</text>
</comment>
<comment type="similarity">
    <text evidence="4">Belongs to the alpha-ionylideneethane synthase family.</text>
</comment>